<accession>Q9AEV8</accession>
<accession>Q62I92</accession>
<evidence type="ECO:0000255" key="1">
    <source>
        <dbReference type="HAMAP-Rule" id="MF_00199"/>
    </source>
</evidence>
<evidence type="ECO:0000305" key="2"/>
<sequence>MTNFSSSPPIAFGDLQGCHAAYRQLFDTLAPAADTPLWFAGDLVNRGPASLATLREIAALGERAIAVLGNHDLHLLAVAAGIRTLKPGDTIGEILDAPDADDLIEWVRHRPFAHFERGMLMVHAGLLPQWDAALALELADELQRALRASNWRDTLRSLYGNDPNCWSPDLKHADRLRVAFNAFTRIRFCTPEGAMEFRANGGPAAAPAGYLPWFDAPGRKTADVTVVFGHWAALGLMLRENLVALDSGCVWGNRLSAVRLADDPAARVVTQVACERCGAADE</sequence>
<name>APAH_BURMA</name>
<comment type="function">
    <text evidence="1">Hydrolyzes diadenosine 5',5'''-P1,P4-tetraphosphate to yield ADP.</text>
</comment>
<comment type="catalytic activity">
    <reaction evidence="1">
        <text>P(1),P(4)-bis(5'-adenosyl) tetraphosphate + H2O = 2 ADP + 2 H(+)</text>
        <dbReference type="Rhea" id="RHEA:24252"/>
        <dbReference type="ChEBI" id="CHEBI:15377"/>
        <dbReference type="ChEBI" id="CHEBI:15378"/>
        <dbReference type="ChEBI" id="CHEBI:58141"/>
        <dbReference type="ChEBI" id="CHEBI:456216"/>
        <dbReference type="EC" id="3.6.1.41"/>
    </reaction>
</comment>
<comment type="similarity">
    <text evidence="1">Belongs to the Ap4A hydrolase family.</text>
</comment>
<gene>
    <name evidence="1" type="primary">apaH</name>
    <name type="ordered locus">BMA1991</name>
</gene>
<proteinExistence type="inferred from homology"/>
<protein>
    <recommendedName>
        <fullName evidence="1">Bis(5'-nucleosyl)-tetraphosphatase, symmetrical</fullName>
        <ecNumber evidence="1">3.6.1.41</ecNumber>
    </recommendedName>
    <alternativeName>
        <fullName evidence="1">Ap4A hydrolase</fullName>
    </alternativeName>
    <alternativeName>
        <fullName evidence="1">Diadenosine 5',5'''-P1,P4-tetraphosphate pyrophosphohydrolase</fullName>
    </alternativeName>
    <alternativeName>
        <fullName evidence="1">Diadenosine tetraphosphatase</fullName>
    </alternativeName>
</protein>
<dbReference type="EC" id="3.6.1.41" evidence="1"/>
<dbReference type="EMBL" id="AY028370">
    <property type="protein sequence ID" value="AAK27390.1"/>
    <property type="molecule type" value="Genomic_DNA"/>
</dbReference>
<dbReference type="EMBL" id="CP000010">
    <property type="protein sequence ID" value="AAU49991.1"/>
    <property type="molecule type" value="Genomic_DNA"/>
</dbReference>
<dbReference type="RefSeq" id="WP_004186146.1">
    <property type="nucleotide sequence ID" value="NC_006348.1"/>
</dbReference>
<dbReference type="RefSeq" id="YP_103578.1">
    <property type="nucleotide sequence ID" value="NC_006348.1"/>
</dbReference>
<dbReference type="SMR" id="Q9AEV8"/>
<dbReference type="KEGG" id="bma:BMA1991"/>
<dbReference type="PATRIC" id="fig|243160.12.peg.2058"/>
<dbReference type="eggNOG" id="COG0639">
    <property type="taxonomic scope" value="Bacteria"/>
</dbReference>
<dbReference type="HOGENOM" id="CLU_056184_1_0_4"/>
<dbReference type="Proteomes" id="UP000006693">
    <property type="component" value="Chromosome 1"/>
</dbReference>
<dbReference type="GO" id="GO:0008803">
    <property type="term" value="F:bis(5'-nucleosyl)-tetraphosphatase (symmetrical) activity"/>
    <property type="evidence" value="ECO:0007669"/>
    <property type="project" value="UniProtKB-UniRule"/>
</dbReference>
<dbReference type="CDD" id="cd07422">
    <property type="entry name" value="MPP_ApaH"/>
    <property type="match status" value="1"/>
</dbReference>
<dbReference type="Gene3D" id="3.60.21.10">
    <property type="match status" value="1"/>
</dbReference>
<dbReference type="HAMAP" id="MF_00199">
    <property type="entry name" value="ApaH"/>
    <property type="match status" value="1"/>
</dbReference>
<dbReference type="InterPro" id="IPR004617">
    <property type="entry name" value="ApaH"/>
</dbReference>
<dbReference type="InterPro" id="IPR004843">
    <property type="entry name" value="Calcineurin-like_PHP_ApaH"/>
</dbReference>
<dbReference type="InterPro" id="IPR029052">
    <property type="entry name" value="Metallo-depent_PP-like"/>
</dbReference>
<dbReference type="NCBIfam" id="TIGR00668">
    <property type="entry name" value="apaH"/>
    <property type="match status" value="1"/>
</dbReference>
<dbReference type="NCBIfam" id="NF001204">
    <property type="entry name" value="PRK00166.1"/>
    <property type="match status" value="1"/>
</dbReference>
<dbReference type="PANTHER" id="PTHR40942">
    <property type="match status" value="1"/>
</dbReference>
<dbReference type="PANTHER" id="PTHR40942:SF4">
    <property type="entry name" value="CYTOCHROME C5"/>
    <property type="match status" value="1"/>
</dbReference>
<dbReference type="Pfam" id="PF00149">
    <property type="entry name" value="Metallophos"/>
    <property type="match status" value="1"/>
</dbReference>
<dbReference type="PIRSF" id="PIRSF000903">
    <property type="entry name" value="B5n-ttraPtase_sm"/>
    <property type="match status" value="1"/>
</dbReference>
<dbReference type="SUPFAM" id="SSF56300">
    <property type="entry name" value="Metallo-dependent phosphatases"/>
    <property type="match status" value="1"/>
</dbReference>
<feature type="chain" id="PRO_0000197984" description="Bis(5'-nucleosyl)-tetraphosphatase, symmetrical">
    <location>
        <begin position="1"/>
        <end position="282"/>
    </location>
</feature>
<feature type="sequence conflict" description="In Ref. 1; AAK27390." evidence="2" ref="1">
    <original>T</original>
    <variation>S</variation>
    <location>
        <position position="90"/>
    </location>
</feature>
<feature type="sequence conflict" description="In Ref. 1; AAK27390." evidence="2" ref="1">
    <original>D</original>
    <variation>Y</variation>
    <location>
        <position position="96"/>
    </location>
</feature>
<feature type="sequence conflict" description="In Ref. 1; AAK27390." evidence="2" ref="1">
    <original>A</original>
    <variation>P</variation>
    <location>
        <position position="280"/>
    </location>
</feature>
<organism>
    <name type="scientific">Burkholderia mallei (strain ATCC 23344)</name>
    <dbReference type="NCBI Taxonomy" id="243160"/>
    <lineage>
        <taxon>Bacteria</taxon>
        <taxon>Pseudomonadati</taxon>
        <taxon>Pseudomonadota</taxon>
        <taxon>Betaproteobacteria</taxon>
        <taxon>Burkholderiales</taxon>
        <taxon>Burkholderiaceae</taxon>
        <taxon>Burkholderia</taxon>
        <taxon>pseudomallei group</taxon>
    </lineage>
</organism>
<keyword id="KW-0378">Hydrolase</keyword>
<keyword id="KW-1185">Reference proteome</keyword>
<reference key="1">
    <citation type="journal article" date="2002" name="J. Bacteriol.">
        <title>Molecular and physical characterization of Burkholderia mallei O antigens.</title>
        <authorList>
            <person name="Burtnick M.N."/>
            <person name="Brett P.J."/>
            <person name="Woods D.E."/>
        </authorList>
    </citation>
    <scope>NUCLEOTIDE SEQUENCE [GENOMIC DNA]</scope>
</reference>
<reference key="2">
    <citation type="journal article" date="2004" name="Proc. Natl. Acad. Sci. U.S.A.">
        <title>Structural flexibility in the Burkholderia mallei genome.</title>
        <authorList>
            <person name="Nierman W.C."/>
            <person name="DeShazer D."/>
            <person name="Kim H.S."/>
            <person name="Tettelin H."/>
            <person name="Nelson K.E."/>
            <person name="Feldblyum T.V."/>
            <person name="Ulrich R.L."/>
            <person name="Ronning C.M."/>
            <person name="Brinkac L.M."/>
            <person name="Daugherty S.C."/>
            <person name="Davidsen T.D."/>
            <person name="DeBoy R.T."/>
            <person name="Dimitrov G."/>
            <person name="Dodson R.J."/>
            <person name="Durkin A.S."/>
            <person name="Gwinn M.L."/>
            <person name="Haft D.H."/>
            <person name="Khouri H.M."/>
            <person name="Kolonay J.F."/>
            <person name="Madupu R."/>
            <person name="Mohammoud Y."/>
            <person name="Nelson W.C."/>
            <person name="Radune D."/>
            <person name="Romero C.M."/>
            <person name="Sarria S."/>
            <person name="Selengut J."/>
            <person name="Shamblin C."/>
            <person name="Sullivan S.A."/>
            <person name="White O."/>
            <person name="Yu Y."/>
            <person name="Zafar N."/>
            <person name="Zhou L."/>
            <person name="Fraser C.M."/>
        </authorList>
    </citation>
    <scope>NUCLEOTIDE SEQUENCE [LARGE SCALE GENOMIC DNA]</scope>
    <source>
        <strain>ATCC 23344</strain>
    </source>
</reference>